<organism>
    <name type="scientific">Cutibacterium acnes (strain DSM 16379 / KPA171202)</name>
    <name type="common">Propionibacterium acnes</name>
    <dbReference type="NCBI Taxonomy" id="267747"/>
    <lineage>
        <taxon>Bacteria</taxon>
        <taxon>Bacillati</taxon>
        <taxon>Actinomycetota</taxon>
        <taxon>Actinomycetes</taxon>
        <taxon>Propionibacteriales</taxon>
        <taxon>Propionibacteriaceae</taxon>
        <taxon>Cutibacterium</taxon>
    </lineage>
</organism>
<reference key="1">
    <citation type="journal article" date="2004" name="Science">
        <title>The complete genome sequence of Propionibacterium acnes, a commensal of human skin.</title>
        <authorList>
            <person name="Brueggemann H."/>
            <person name="Henne A."/>
            <person name="Hoster F."/>
            <person name="Liesegang H."/>
            <person name="Wiezer A."/>
            <person name="Strittmatter A."/>
            <person name="Hujer S."/>
            <person name="Duerre P."/>
            <person name="Gottschalk G."/>
        </authorList>
    </citation>
    <scope>NUCLEOTIDE SEQUENCE [LARGE SCALE GENOMIC DNA]</scope>
    <source>
        <strain>DSM 16379 / KPA171202</strain>
    </source>
</reference>
<comment type="function">
    <text evidence="1">One of the primary rRNA binding proteins. Required for association of the 30S and 50S subunits to form the 70S ribosome, for tRNA binding and peptide bond formation. It has been suggested to have peptidyltransferase activity; this is somewhat controversial. Makes several contacts with the 16S rRNA in the 70S ribosome.</text>
</comment>
<comment type="subunit">
    <text evidence="1">Part of the 50S ribosomal subunit. Forms a bridge to the 30S subunit in the 70S ribosome.</text>
</comment>
<comment type="similarity">
    <text evidence="1">Belongs to the universal ribosomal protein uL2 family.</text>
</comment>
<protein>
    <recommendedName>
        <fullName evidence="1">Large ribosomal subunit protein uL2</fullName>
    </recommendedName>
    <alternativeName>
        <fullName evidence="3">50S ribosomal protein L2</fullName>
    </alternativeName>
</protein>
<gene>
    <name evidence="1" type="primary">rplB</name>
    <name type="ordered locus">PPA1860</name>
</gene>
<dbReference type="EMBL" id="AE017283">
    <property type="protein sequence ID" value="AAT83584.1"/>
    <property type="molecule type" value="Genomic_DNA"/>
</dbReference>
<dbReference type="RefSeq" id="WP_002514866.1">
    <property type="nucleotide sequence ID" value="NZ_CP025935.1"/>
</dbReference>
<dbReference type="PDB" id="8CRX">
    <property type="method" value="EM"/>
    <property type="resolution" value="2.78 A"/>
    <property type="chains" value="c=1-278"/>
</dbReference>
<dbReference type="PDB" id="8CVM">
    <property type="method" value="EM"/>
    <property type="resolution" value="2.66 A"/>
    <property type="chains" value="c=1-278"/>
</dbReference>
<dbReference type="PDBsum" id="8CRX"/>
<dbReference type="PDBsum" id="8CVM"/>
<dbReference type="SMR" id="Q6A6M9"/>
<dbReference type="EnsemblBacteria" id="AAT83584">
    <property type="protein sequence ID" value="AAT83584"/>
    <property type="gene ID" value="PPA1860"/>
</dbReference>
<dbReference type="GeneID" id="92857807"/>
<dbReference type="KEGG" id="pac:PPA1860"/>
<dbReference type="eggNOG" id="COG0090">
    <property type="taxonomic scope" value="Bacteria"/>
</dbReference>
<dbReference type="HOGENOM" id="CLU_036235_2_1_11"/>
<dbReference type="Proteomes" id="UP000000603">
    <property type="component" value="Chromosome"/>
</dbReference>
<dbReference type="GO" id="GO:0015934">
    <property type="term" value="C:large ribosomal subunit"/>
    <property type="evidence" value="ECO:0007669"/>
    <property type="project" value="InterPro"/>
</dbReference>
<dbReference type="GO" id="GO:0019843">
    <property type="term" value="F:rRNA binding"/>
    <property type="evidence" value="ECO:0007669"/>
    <property type="project" value="UniProtKB-UniRule"/>
</dbReference>
<dbReference type="GO" id="GO:0003735">
    <property type="term" value="F:structural constituent of ribosome"/>
    <property type="evidence" value="ECO:0007669"/>
    <property type="project" value="InterPro"/>
</dbReference>
<dbReference type="GO" id="GO:0016740">
    <property type="term" value="F:transferase activity"/>
    <property type="evidence" value="ECO:0007669"/>
    <property type="project" value="InterPro"/>
</dbReference>
<dbReference type="GO" id="GO:0002181">
    <property type="term" value="P:cytoplasmic translation"/>
    <property type="evidence" value="ECO:0007669"/>
    <property type="project" value="TreeGrafter"/>
</dbReference>
<dbReference type="FunFam" id="2.30.30.30:FF:000001">
    <property type="entry name" value="50S ribosomal protein L2"/>
    <property type="match status" value="1"/>
</dbReference>
<dbReference type="FunFam" id="2.40.50.140:FF:000003">
    <property type="entry name" value="50S ribosomal protein L2"/>
    <property type="match status" value="1"/>
</dbReference>
<dbReference type="FunFam" id="4.10.950.10:FF:000001">
    <property type="entry name" value="50S ribosomal protein L2"/>
    <property type="match status" value="1"/>
</dbReference>
<dbReference type="Gene3D" id="2.30.30.30">
    <property type="match status" value="1"/>
</dbReference>
<dbReference type="Gene3D" id="2.40.50.140">
    <property type="entry name" value="Nucleic acid-binding proteins"/>
    <property type="match status" value="1"/>
</dbReference>
<dbReference type="Gene3D" id="4.10.950.10">
    <property type="entry name" value="Ribosomal protein L2, domain 3"/>
    <property type="match status" value="1"/>
</dbReference>
<dbReference type="HAMAP" id="MF_01320_B">
    <property type="entry name" value="Ribosomal_uL2_B"/>
    <property type="match status" value="1"/>
</dbReference>
<dbReference type="InterPro" id="IPR012340">
    <property type="entry name" value="NA-bd_OB-fold"/>
</dbReference>
<dbReference type="InterPro" id="IPR014722">
    <property type="entry name" value="Rib_uL2_dom2"/>
</dbReference>
<dbReference type="InterPro" id="IPR002171">
    <property type="entry name" value="Ribosomal_uL2"/>
</dbReference>
<dbReference type="InterPro" id="IPR005880">
    <property type="entry name" value="Ribosomal_uL2_bac/org-type"/>
</dbReference>
<dbReference type="InterPro" id="IPR022669">
    <property type="entry name" value="Ribosomal_uL2_C"/>
</dbReference>
<dbReference type="InterPro" id="IPR022671">
    <property type="entry name" value="Ribosomal_uL2_CS"/>
</dbReference>
<dbReference type="InterPro" id="IPR014726">
    <property type="entry name" value="Ribosomal_uL2_dom3"/>
</dbReference>
<dbReference type="InterPro" id="IPR022666">
    <property type="entry name" value="Ribosomal_uL2_RNA-bd_dom"/>
</dbReference>
<dbReference type="InterPro" id="IPR008991">
    <property type="entry name" value="Translation_prot_SH3-like_sf"/>
</dbReference>
<dbReference type="NCBIfam" id="TIGR01171">
    <property type="entry name" value="rplB_bact"/>
    <property type="match status" value="1"/>
</dbReference>
<dbReference type="PANTHER" id="PTHR13691:SF5">
    <property type="entry name" value="LARGE RIBOSOMAL SUBUNIT PROTEIN UL2M"/>
    <property type="match status" value="1"/>
</dbReference>
<dbReference type="PANTHER" id="PTHR13691">
    <property type="entry name" value="RIBOSOMAL PROTEIN L2"/>
    <property type="match status" value="1"/>
</dbReference>
<dbReference type="Pfam" id="PF00181">
    <property type="entry name" value="Ribosomal_L2"/>
    <property type="match status" value="1"/>
</dbReference>
<dbReference type="Pfam" id="PF03947">
    <property type="entry name" value="Ribosomal_L2_C"/>
    <property type="match status" value="1"/>
</dbReference>
<dbReference type="PIRSF" id="PIRSF002158">
    <property type="entry name" value="Ribosomal_L2"/>
    <property type="match status" value="1"/>
</dbReference>
<dbReference type="SMART" id="SM01383">
    <property type="entry name" value="Ribosomal_L2"/>
    <property type="match status" value="1"/>
</dbReference>
<dbReference type="SMART" id="SM01382">
    <property type="entry name" value="Ribosomal_L2_C"/>
    <property type="match status" value="1"/>
</dbReference>
<dbReference type="SUPFAM" id="SSF50249">
    <property type="entry name" value="Nucleic acid-binding proteins"/>
    <property type="match status" value="1"/>
</dbReference>
<dbReference type="SUPFAM" id="SSF50104">
    <property type="entry name" value="Translation proteins SH3-like domain"/>
    <property type="match status" value="1"/>
</dbReference>
<dbReference type="PROSITE" id="PS00467">
    <property type="entry name" value="RIBOSOMAL_L2"/>
    <property type="match status" value="1"/>
</dbReference>
<name>RL2_CUTAK</name>
<proteinExistence type="evidence at protein level"/>
<evidence type="ECO:0000255" key="1">
    <source>
        <dbReference type="HAMAP-Rule" id="MF_01320"/>
    </source>
</evidence>
<evidence type="ECO:0000256" key="2">
    <source>
        <dbReference type="SAM" id="MobiDB-lite"/>
    </source>
</evidence>
<evidence type="ECO:0000305" key="3"/>
<evidence type="ECO:0007829" key="4">
    <source>
        <dbReference type="PDB" id="8CVM"/>
    </source>
</evidence>
<keyword id="KW-0002">3D-structure</keyword>
<keyword id="KW-0687">Ribonucleoprotein</keyword>
<keyword id="KW-0689">Ribosomal protein</keyword>
<keyword id="KW-0694">RNA-binding</keyword>
<keyword id="KW-0699">rRNA-binding</keyword>
<feature type="chain" id="PRO_0000237225" description="Large ribosomal subunit protein uL2">
    <location>
        <begin position="1"/>
        <end position="278"/>
    </location>
</feature>
<feature type="region of interest" description="Disordered" evidence="2">
    <location>
        <begin position="1"/>
        <end position="20"/>
    </location>
</feature>
<feature type="region of interest" description="Disordered" evidence="2">
    <location>
        <begin position="225"/>
        <end position="278"/>
    </location>
</feature>
<feature type="compositionally biased region" description="Basic residues" evidence="2">
    <location>
        <begin position="258"/>
        <end position="278"/>
    </location>
</feature>
<feature type="strand" evidence="4">
    <location>
        <begin position="3"/>
        <end position="5"/>
    </location>
</feature>
<feature type="strand" evidence="4">
    <location>
        <begin position="13"/>
        <end position="15"/>
    </location>
</feature>
<feature type="strand" evidence="4">
    <location>
        <begin position="17"/>
        <end position="19"/>
    </location>
</feature>
<feature type="helix" evidence="4">
    <location>
        <begin position="31"/>
        <end position="33"/>
    </location>
</feature>
<feature type="strand" evidence="4">
    <location>
        <begin position="34"/>
        <end position="36"/>
    </location>
</feature>
<feature type="strand" evidence="4">
    <location>
        <begin position="47"/>
        <end position="51"/>
    </location>
</feature>
<feature type="strand" evidence="4">
    <location>
        <begin position="61"/>
        <end position="63"/>
    </location>
</feature>
<feature type="helix" evidence="4">
    <location>
        <begin position="70"/>
        <end position="72"/>
    </location>
</feature>
<feature type="strand" evidence="4">
    <location>
        <begin position="77"/>
        <end position="84"/>
    </location>
</feature>
<feature type="strand" evidence="4">
    <location>
        <begin position="88"/>
        <end position="97"/>
    </location>
</feature>
<feature type="strand" evidence="4">
    <location>
        <begin position="102"/>
        <end position="106"/>
    </location>
</feature>
<feature type="strand" evidence="4">
    <location>
        <begin position="130"/>
        <end position="132"/>
    </location>
</feature>
<feature type="turn" evidence="4">
    <location>
        <begin position="133"/>
        <end position="135"/>
    </location>
</feature>
<feature type="strand" evidence="4">
    <location>
        <begin position="141"/>
        <end position="148"/>
    </location>
</feature>
<feature type="strand" evidence="4">
    <location>
        <begin position="153"/>
        <end position="156"/>
    </location>
</feature>
<feature type="strand" evidence="4">
    <location>
        <begin position="163"/>
        <end position="167"/>
    </location>
</feature>
<feature type="strand" evidence="4">
    <location>
        <begin position="172"/>
        <end position="176"/>
    </location>
</feature>
<feature type="strand" evidence="4">
    <location>
        <begin position="182"/>
        <end position="186"/>
    </location>
</feature>
<feature type="strand" evidence="4">
    <location>
        <begin position="190"/>
        <end position="194"/>
    </location>
</feature>
<feature type="helix" evidence="4">
    <location>
        <begin position="201"/>
        <end position="203"/>
    </location>
</feature>
<feature type="helix" evidence="4">
    <location>
        <begin position="209"/>
        <end position="215"/>
    </location>
</feature>
<feature type="helix" evidence="4">
    <location>
        <begin position="223"/>
        <end position="225"/>
    </location>
</feature>
<feature type="turn" evidence="4">
    <location>
        <begin position="228"/>
        <end position="230"/>
    </location>
</feature>
<feature type="strand" evidence="4">
    <location>
        <begin position="237"/>
        <end position="239"/>
    </location>
</feature>
<feature type="strand" evidence="4">
    <location>
        <begin position="243"/>
        <end position="245"/>
    </location>
</feature>
<feature type="strand" evidence="4">
    <location>
        <begin position="253"/>
        <end position="255"/>
    </location>
</feature>
<feature type="strand" evidence="4">
    <location>
        <begin position="260"/>
        <end position="263"/>
    </location>
</feature>
<feature type="helix" evidence="4">
    <location>
        <begin position="264"/>
        <end position="266"/>
    </location>
</feature>
<feature type="strand" evidence="4">
    <location>
        <begin position="267"/>
        <end position="269"/>
    </location>
</feature>
<sequence length="278" mass="30247">MGIRKYKPTTPGRRGSSVSDFVELTRSTPEKSLLVAKPKTGGRNNTGRITTRHIGGGHKQAYRIIDFKRYDKDGVPAKVAHIEYDPNRTARIALLHYADGEKRYIIAPDGVGQGTVVVSGPEADIKPGNNLPLRNIPVGTTVHAVELRPGGGAKMGRSAGASVQLVAREGKYATVRLPSGEMRMVDIRCRATIGEVGNAEQININWGKAGRNRWKGIRPTVRGVVMNPIDHPHGGGEGRTSGGRHPVSPWGKPEGRTRNKKKASSRLIVRRRKSGKKR</sequence>
<accession>Q6A6M9</accession>